<reference key="1">
    <citation type="journal article" date="2005" name="Science">
        <title>The transcriptional landscape of the mammalian genome.</title>
        <authorList>
            <person name="Carninci P."/>
            <person name="Kasukawa T."/>
            <person name="Katayama S."/>
            <person name="Gough J."/>
            <person name="Frith M.C."/>
            <person name="Maeda N."/>
            <person name="Oyama R."/>
            <person name="Ravasi T."/>
            <person name="Lenhard B."/>
            <person name="Wells C."/>
            <person name="Kodzius R."/>
            <person name="Shimokawa K."/>
            <person name="Bajic V.B."/>
            <person name="Brenner S.E."/>
            <person name="Batalov S."/>
            <person name="Forrest A.R."/>
            <person name="Zavolan M."/>
            <person name="Davis M.J."/>
            <person name="Wilming L.G."/>
            <person name="Aidinis V."/>
            <person name="Allen J.E."/>
            <person name="Ambesi-Impiombato A."/>
            <person name="Apweiler R."/>
            <person name="Aturaliya R.N."/>
            <person name="Bailey T.L."/>
            <person name="Bansal M."/>
            <person name="Baxter L."/>
            <person name="Beisel K.W."/>
            <person name="Bersano T."/>
            <person name="Bono H."/>
            <person name="Chalk A.M."/>
            <person name="Chiu K.P."/>
            <person name="Choudhary V."/>
            <person name="Christoffels A."/>
            <person name="Clutterbuck D.R."/>
            <person name="Crowe M.L."/>
            <person name="Dalla E."/>
            <person name="Dalrymple B.P."/>
            <person name="de Bono B."/>
            <person name="Della Gatta G."/>
            <person name="di Bernardo D."/>
            <person name="Down T."/>
            <person name="Engstrom P."/>
            <person name="Fagiolini M."/>
            <person name="Faulkner G."/>
            <person name="Fletcher C.F."/>
            <person name="Fukushima T."/>
            <person name="Furuno M."/>
            <person name="Futaki S."/>
            <person name="Gariboldi M."/>
            <person name="Georgii-Hemming P."/>
            <person name="Gingeras T.R."/>
            <person name="Gojobori T."/>
            <person name="Green R.E."/>
            <person name="Gustincich S."/>
            <person name="Harbers M."/>
            <person name="Hayashi Y."/>
            <person name="Hensch T.K."/>
            <person name="Hirokawa N."/>
            <person name="Hill D."/>
            <person name="Huminiecki L."/>
            <person name="Iacono M."/>
            <person name="Ikeo K."/>
            <person name="Iwama A."/>
            <person name="Ishikawa T."/>
            <person name="Jakt M."/>
            <person name="Kanapin A."/>
            <person name="Katoh M."/>
            <person name="Kawasawa Y."/>
            <person name="Kelso J."/>
            <person name="Kitamura H."/>
            <person name="Kitano H."/>
            <person name="Kollias G."/>
            <person name="Krishnan S.P."/>
            <person name="Kruger A."/>
            <person name="Kummerfeld S.K."/>
            <person name="Kurochkin I.V."/>
            <person name="Lareau L.F."/>
            <person name="Lazarevic D."/>
            <person name="Lipovich L."/>
            <person name="Liu J."/>
            <person name="Liuni S."/>
            <person name="McWilliam S."/>
            <person name="Madan Babu M."/>
            <person name="Madera M."/>
            <person name="Marchionni L."/>
            <person name="Matsuda H."/>
            <person name="Matsuzawa S."/>
            <person name="Miki H."/>
            <person name="Mignone F."/>
            <person name="Miyake S."/>
            <person name="Morris K."/>
            <person name="Mottagui-Tabar S."/>
            <person name="Mulder N."/>
            <person name="Nakano N."/>
            <person name="Nakauchi H."/>
            <person name="Ng P."/>
            <person name="Nilsson R."/>
            <person name="Nishiguchi S."/>
            <person name="Nishikawa S."/>
            <person name="Nori F."/>
            <person name="Ohara O."/>
            <person name="Okazaki Y."/>
            <person name="Orlando V."/>
            <person name="Pang K.C."/>
            <person name="Pavan W.J."/>
            <person name="Pavesi G."/>
            <person name="Pesole G."/>
            <person name="Petrovsky N."/>
            <person name="Piazza S."/>
            <person name="Reed J."/>
            <person name="Reid J.F."/>
            <person name="Ring B.Z."/>
            <person name="Ringwald M."/>
            <person name="Rost B."/>
            <person name="Ruan Y."/>
            <person name="Salzberg S.L."/>
            <person name="Sandelin A."/>
            <person name="Schneider C."/>
            <person name="Schoenbach C."/>
            <person name="Sekiguchi K."/>
            <person name="Semple C.A."/>
            <person name="Seno S."/>
            <person name="Sessa L."/>
            <person name="Sheng Y."/>
            <person name="Shibata Y."/>
            <person name="Shimada H."/>
            <person name="Shimada K."/>
            <person name="Silva D."/>
            <person name="Sinclair B."/>
            <person name="Sperling S."/>
            <person name="Stupka E."/>
            <person name="Sugiura K."/>
            <person name="Sultana R."/>
            <person name="Takenaka Y."/>
            <person name="Taki K."/>
            <person name="Tammoja K."/>
            <person name="Tan S.L."/>
            <person name="Tang S."/>
            <person name="Taylor M.S."/>
            <person name="Tegner J."/>
            <person name="Teichmann S.A."/>
            <person name="Ueda H.R."/>
            <person name="van Nimwegen E."/>
            <person name="Verardo R."/>
            <person name="Wei C.L."/>
            <person name="Yagi K."/>
            <person name="Yamanishi H."/>
            <person name="Zabarovsky E."/>
            <person name="Zhu S."/>
            <person name="Zimmer A."/>
            <person name="Hide W."/>
            <person name="Bult C."/>
            <person name="Grimmond S.M."/>
            <person name="Teasdale R.D."/>
            <person name="Liu E.T."/>
            <person name="Brusic V."/>
            <person name="Quackenbush J."/>
            <person name="Wahlestedt C."/>
            <person name="Mattick J.S."/>
            <person name="Hume D.A."/>
            <person name="Kai C."/>
            <person name="Sasaki D."/>
            <person name="Tomaru Y."/>
            <person name="Fukuda S."/>
            <person name="Kanamori-Katayama M."/>
            <person name="Suzuki M."/>
            <person name="Aoki J."/>
            <person name="Arakawa T."/>
            <person name="Iida J."/>
            <person name="Imamura K."/>
            <person name="Itoh M."/>
            <person name="Kato T."/>
            <person name="Kawaji H."/>
            <person name="Kawagashira N."/>
            <person name="Kawashima T."/>
            <person name="Kojima M."/>
            <person name="Kondo S."/>
            <person name="Konno H."/>
            <person name="Nakano K."/>
            <person name="Ninomiya N."/>
            <person name="Nishio T."/>
            <person name="Okada M."/>
            <person name="Plessy C."/>
            <person name="Shibata K."/>
            <person name="Shiraki T."/>
            <person name="Suzuki S."/>
            <person name="Tagami M."/>
            <person name="Waki K."/>
            <person name="Watahiki A."/>
            <person name="Okamura-Oho Y."/>
            <person name="Suzuki H."/>
            <person name="Kawai J."/>
            <person name="Hayashizaki Y."/>
        </authorList>
    </citation>
    <scope>NUCLEOTIDE SEQUENCE [LARGE SCALE MRNA]</scope>
    <source>
        <strain>C57BL/6J</strain>
        <tissue>Eye</tissue>
        <tissue>Heart</tissue>
    </source>
</reference>
<reference key="2">
    <citation type="journal article" date="2009" name="PLoS Biol.">
        <title>Lineage-specific biology revealed by a finished genome assembly of the mouse.</title>
        <authorList>
            <person name="Church D.M."/>
            <person name="Goodstadt L."/>
            <person name="Hillier L.W."/>
            <person name="Zody M.C."/>
            <person name="Goldstein S."/>
            <person name="She X."/>
            <person name="Bult C.J."/>
            <person name="Agarwala R."/>
            <person name="Cherry J.L."/>
            <person name="DiCuccio M."/>
            <person name="Hlavina W."/>
            <person name="Kapustin Y."/>
            <person name="Meric P."/>
            <person name="Maglott D."/>
            <person name="Birtle Z."/>
            <person name="Marques A.C."/>
            <person name="Graves T."/>
            <person name="Zhou S."/>
            <person name="Teague B."/>
            <person name="Potamousis K."/>
            <person name="Churas C."/>
            <person name="Place M."/>
            <person name="Herschleb J."/>
            <person name="Runnheim R."/>
            <person name="Forrest D."/>
            <person name="Amos-Landgraf J."/>
            <person name="Schwartz D.C."/>
            <person name="Cheng Z."/>
            <person name="Lindblad-Toh K."/>
            <person name="Eichler E.E."/>
            <person name="Ponting C.P."/>
        </authorList>
    </citation>
    <scope>NUCLEOTIDE SEQUENCE [LARGE SCALE GENOMIC DNA]</scope>
    <source>
        <strain>C57BL/6J</strain>
    </source>
</reference>
<reference key="3">
    <citation type="journal article" date="2004" name="Genome Res.">
        <title>The status, quality, and expansion of the NIH full-length cDNA project: the Mammalian Gene Collection (MGC).</title>
        <authorList>
            <consortium name="The MGC Project Team"/>
        </authorList>
    </citation>
    <scope>NUCLEOTIDE SEQUENCE [LARGE SCALE MRNA]</scope>
    <source>
        <strain>C57BL/6J</strain>
        <strain>FVB/N</strain>
        <tissue>Embryo</tissue>
        <tissue>Mammary tumor</tissue>
    </source>
</reference>
<reference key="4">
    <citation type="journal article" date="2010" name="Cell">
        <title>A tissue-specific atlas of mouse protein phosphorylation and expression.</title>
        <authorList>
            <person name="Huttlin E.L."/>
            <person name="Jedrychowski M.P."/>
            <person name="Elias J.E."/>
            <person name="Goswami T."/>
            <person name="Rad R."/>
            <person name="Beausoleil S.A."/>
            <person name="Villen J."/>
            <person name="Haas W."/>
            <person name="Sowa M.E."/>
            <person name="Gygi S.P."/>
        </authorList>
    </citation>
    <scope>PHOSPHORYLATION [LARGE SCALE ANALYSIS] AT SER-23</scope>
    <scope>IDENTIFICATION BY MASS SPECTROMETRY [LARGE SCALE ANALYSIS]</scope>
    <source>
        <tissue>Brain</tissue>
        <tissue>Brown adipose tissue</tissue>
        <tissue>Heart</tissue>
        <tissue>Kidney</tissue>
        <tissue>Liver</tissue>
        <tissue>Lung</tissue>
        <tissue>Pancreas</tissue>
        <tissue>Spleen</tissue>
        <tissue>Testis</tissue>
    </source>
</reference>
<reference key="5">
    <citation type="journal article" date="2013" name="Mol. Cell">
        <title>SIRT5-mediated lysine desuccinylation impacts diverse metabolic pathways.</title>
        <authorList>
            <person name="Park J."/>
            <person name="Chen Y."/>
            <person name="Tishkoff D.X."/>
            <person name="Peng C."/>
            <person name="Tan M."/>
            <person name="Dai L."/>
            <person name="Xie Z."/>
            <person name="Zhang Y."/>
            <person name="Zwaans B.M."/>
            <person name="Skinner M.E."/>
            <person name="Lombard D.B."/>
            <person name="Zhao Y."/>
        </authorList>
    </citation>
    <scope>ACETYLATION [LARGE SCALE ANALYSIS] AT LYS-135</scope>
    <scope>SUCCINYLATION [LARGE SCALE ANALYSIS] AT LYS-73</scope>
    <scope>IDENTIFICATION BY MASS SPECTROMETRY [LARGE SCALE ANALYSIS]</scope>
    <source>
        <tissue>Embryonic fibroblast</tissue>
    </source>
</reference>
<organism>
    <name type="scientific">Mus musculus</name>
    <name type="common">Mouse</name>
    <dbReference type="NCBI Taxonomy" id="10090"/>
    <lineage>
        <taxon>Eukaryota</taxon>
        <taxon>Metazoa</taxon>
        <taxon>Chordata</taxon>
        <taxon>Craniata</taxon>
        <taxon>Vertebrata</taxon>
        <taxon>Euteleostomi</taxon>
        <taxon>Mammalia</taxon>
        <taxon>Eutheria</taxon>
        <taxon>Euarchontoglires</taxon>
        <taxon>Glires</taxon>
        <taxon>Rodentia</taxon>
        <taxon>Myomorpha</taxon>
        <taxon>Muroidea</taxon>
        <taxon>Muridae</taxon>
        <taxon>Murinae</taxon>
        <taxon>Mus</taxon>
        <taxon>Mus</taxon>
    </lineage>
</organism>
<sequence length="307" mass="34877">MTKAGSKGGNLRDKLDGNELDLSLSDLNEVPVKELAALPKATVLDLSCNKLSTLPSDFCGLTHLVKLDLSKNKLQQLPADFGRLVNLQHLDLLNNRLVTLPVSFAQLKNLKWLDLKDNPLDPVLAKVAGDCLDEKQCKQCANKVLQHMKAVQADQERERQRRLEVEREAEKKREAKQQAKEAKERELRKREKAEEKERRRKEYDAQKASKREQEKKPKKEANQAPKSKSGSRPRKPPPRKHTRSWAVLKVLLLLLLLCVAGGLVVCRVTGLHQQPLCTSVNTIYDNAVQGLRHHEILQWVLQTDSQQ</sequence>
<feature type="chain" id="PRO_0000235160" description="Leucine-rich repeat-containing protein 59">
    <location>
        <begin position="1"/>
        <end position="307"/>
    </location>
</feature>
<feature type="initiator methionine" description="Removed; alternate" evidence="2">
    <location>
        <position position="1"/>
    </location>
</feature>
<feature type="chain" id="PRO_0000441740" description="Leucine-rich repeat-containing protein 59, N-terminally processed">
    <location>
        <begin position="2"/>
        <end position="307"/>
    </location>
</feature>
<feature type="topological domain" description="Cytoplasmic" evidence="3">
    <location>
        <begin position="2"/>
        <end position="244"/>
    </location>
</feature>
<feature type="transmembrane region" description="Helical" evidence="3">
    <location>
        <begin position="245"/>
        <end position="265"/>
    </location>
</feature>
<feature type="topological domain" description="Lumenal" evidence="3">
    <location>
        <begin position="266"/>
        <end position="307"/>
    </location>
</feature>
<feature type="repeat" description="LRR 1">
    <location>
        <begin position="10"/>
        <end position="31"/>
    </location>
</feature>
<feature type="repeat" description="LRR 2">
    <location>
        <begin position="40"/>
        <end position="62"/>
    </location>
</feature>
<feature type="repeat" description="LRR 3">
    <location>
        <begin position="63"/>
        <end position="84"/>
    </location>
</feature>
<feature type="repeat" description="LRR 4">
    <location>
        <begin position="86"/>
        <end position="107"/>
    </location>
</feature>
<feature type="repeat" description="LRR 5">
    <location>
        <begin position="109"/>
        <end position="128"/>
    </location>
</feature>
<feature type="region of interest" description="Disordered" evidence="4">
    <location>
        <begin position="150"/>
        <end position="241"/>
    </location>
</feature>
<feature type="coiled-coil region" evidence="3">
    <location>
        <begin position="148"/>
        <end position="216"/>
    </location>
</feature>
<feature type="compositionally biased region" description="Basic and acidic residues" evidence="4">
    <location>
        <begin position="154"/>
        <end position="221"/>
    </location>
</feature>
<feature type="compositionally biased region" description="Basic residues" evidence="4">
    <location>
        <begin position="229"/>
        <end position="241"/>
    </location>
</feature>
<feature type="modified residue" description="N-acetylmethionine" evidence="2">
    <location>
        <position position="1"/>
    </location>
</feature>
<feature type="modified residue" description="N-acetylthreonine; in Leucine-rich repeat-containing protein 59, N-terminally processed" evidence="2">
    <location>
        <position position="2"/>
    </location>
</feature>
<feature type="modified residue" description="Phosphoserine" evidence="6">
    <location>
        <position position="23"/>
    </location>
</feature>
<feature type="modified residue" description="Phosphoserine" evidence="2">
    <location>
        <position position="25"/>
    </location>
</feature>
<feature type="modified residue" description="N6-succinyllysine" evidence="7">
    <location>
        <position position="73"/>
    </location>
</feature>
<feature type="modified residue" description="N6-acetyllysine" evidence="7">
    <location>
        <position position="135"/>
    </location>
</feature>
<feature type="sequence conflict" description="In Ref. 1; BAE38865." evidence="5" ref="1">
    <original>K</original>
    <variation>E</variation>
    <location>
        <position position="189"/>
    </location>
</feature>
<proteinExistence type="evidence at protein level"/>
<keyword id="KW-0007">Acetylation</keyword>
<keyword id="KW-0175">Coiled coil</keyword>
<keyword id="KW-0256">Endoplasmic reticulum</keyword>
<keyword id="KW-0433">Leucine-rich repeat</keyword>
<keyword id="KW-0472">Membrane</keyword>
<keyword id="KW-0492">Microsome</keyword>
<keyword id="KW-0539">Nucleus</keyword>
<keyword id="KW-0597">Phosphoprotein</keyword>
<keyword id="KW-1185">Reference proteome</keyword>
<keyword id="KW-0677">Repeat</keyword>
<keyword id="KW-0735">Signal-anchor</keyword>
<keyword id="KW-0812">Transmembrane</keyword>
<keyword id="KW-1133">Transmembrane helix</keyword>
<comment type="function">
    <text evidence="1">Required for nuclear import of FGF1, but not that of FGF2. Might regulate nuclear import of exogenous FGF1 by facilitating interaction with the nuclear import machinery and by transporting cytosolic FGF1 to, and possibly through, the nuclear pores (By similarity).</text>
</comment>
<comment type="subunit">
    <text evidence="1">Can form homodimers. Interacts with SGO1. Interacts with FGF1.</text>
</comment>
<comment type="subcellular location">
    <subcellularLocation>
        <location evidence="1">Microsome membrane</location>
        <topology evidence="1">Single-pass type II membrane protein</topology>
    </subcellularLocation>
    <subcellularLocation>
        <location evidence="1">Endoplasmic reticulum membrane</location>
        <topology evidence="1">Single-pass type II membrane protein</topology>
    </subcellularLocation>
    <subcellularLocation>
        <location evidence="1">Nucleus envelope</location>
    </subcellularLocation>
    <text evidence="1">Localization in the nuclear envelope depends upon the nuclear import machinery, including KPNB1.</text>
</comment>
<comment type="sequence caution" evidence="5">
    <conflict type="erroneous initiation">
        <sequence resource="EMBL-CDS" id="AAH06877"/>
    </conflict>
</comment>
<comment type="sequence caution" evidence="5">
    <conflict type="erroneous initiation">
        <sequence resource="EMBL-CDS" id="BAE35030"/>
    </conflict>
</comment>
<comment type="sequence caution" evidence="5">
    <conflict type="erroneous initiation">
        <sequence resource="EMBL-CDS" id="BAE38865"/>
    </conflict>
</comment>
<comment type="sequence caution" evidence="5">
    <conflict type="erroneous initiation">
        <sequence resource="EMBL-CDS" id="BAE39660"/>
    </conflict>
</comment>
<evidence type="ECO:0000250" key="1"/>
<evidence type="ECO:0000250" key="2">
    <source>
        <dbReference type="UniProtKB" id="Q96AG4"/>
    </source>
</evidence>
<evidence type="ECO:0000255" key="3"/>
<evidence type="ECO:0000256" key="4">
    <source>
        <dbReference type="SAM" id="MobiDB-lite"/>
    </source>
</evidence>
<evidence type="ECO:0000305" key="5"/>
<evidence type="ECO:0007744" key="6">
    <source>
    </source>
</evidence>
<evidence type="ECO:0007744" key="7">
    <source>
    </source>
</evidence>
<protein>
    <recommendedName>
        <fullName>Leucine-rich repeat-containing protein 59</fullName>
    </recommendedName>
    <component>
        <recommendedName>
            <fullName>Leucine-rich repeat-containing protein 59, N-terminally processed</fullName>
        </recommendedName>
    </component>
</protein>
<gene>
    <name type="primary">Lrrc59</name>
</gene>
<accession>Q922Q8</accession>
<accession>Q3TJ35</accession>
<accession>Q3TLC7</accession>
<accession>Q3TWT9</accession>
<accession>Q3TX86</accession>
<dbReference type="EMBL" id="AK053450">
    <property type="protein sequence ID" value="BAC35390.1"/>
    <property type="molecule type" value="mRNA"/>
</dbReference>
<dbReference type="EMBL" id="AK159374">
    <property type="protein sequence ID" value="BAE35030.1"/>
    <property type="status" value="ALT_INIT"/>
    <property type="molecule type" value="mRNA"/>
</dbReference>
<dbReference type="EMBL" id="AK159552">
    <property type="protein sequence ID" value="BAE35177.1"/>
    <property type="molecule type" value="mRNA"/>
</dbReference>
<dbReference type="EMBL" id="AK166576">
    <property type="protein sequence ID" value="BAE38865.1"/>
    <property type="status" value="ALT_INIT"/>
    <property type="molecule type" value="mRNA"/>
</dbReference>
<dbReference type="EMBL" id="AK167604">
    <property type="protein sequence ID" value="BAE39660.1"/>
    <property type="status" value="ALT_INIT"/>
    <property type="molecule type" value="mRNA"/>
</dbReference>
<dbReference type="EMBL" id="AK169390">
    <property type="protein sequence ID" value="BAE41137.1"/>
    <property type="molecule type" value="mRNA"/>
</dbReference>
<dbReference type="EMBL" id="AL645764">
    <property type="status" value="NOT_ANNOTATED_CDS"/>
    <property type="molecule type" value="Genomic_DNA"/>
</dbReference>
<dbReference type="EMBL" id="BC006877">
    <property type="protein sequence ID" value="AAH06877.1"/>
    <property type="status" value="ALT_INIT"/>
    <property type="molecule type" value="mRNA"/>
</dbReference>
<dbReference type="EMBL" id="BC066172">
    <property type="protein sequence ID" value="AAH66172.1"/>
    <property type="molecule type" value="mRNA"/>
</dbReference>
<dbReference type="CCDS" id="CCDS25261.1"/>
<dbReference type="RefSeq" id="NP_598568.1">
    <property type="nucleotide sequence ID" value="NM_133807.2"/>
</dbReference>
<dbReference type="SMR" id="Q922Q8"/>
<dbReference type="BioGRID" id="221020">
    <property type="interactions" value="39"/>
</dbReference>
<dbReference type="FunCoup" id="Q922Q8">
    <property type="interactions" value="1689"/>
</dbReference>
<dbReference type="IntAct" id="Q922Q8">
    <property type="interactions" value="4"/>
</dbReference>
<dbReference type="STRING" id="10090.ENSMUSP00000021239"/>
<dbReference type="GlyGen" id="Q922Q8">
    <property type="glycosylation" value="1 site, 1 O-linked glycan (1 site)"/>
</dbReference>
<dbReference type="iPTMnet" id="Q922Q8"/>
<dbReference type="PhosphoSitePlus" id="Q922Q8"/>
<dbReference type="SwissPalm" id="Q922Q8"/>
<dbReference type="jPOST" id="Q922Q8"/>
<dbReference type="PaxDb" id="10090-ENSMUSP00000021239"/>
<dbReference type="PeptideAtlas" id="Q922Q8"/>
<dbReference type="ProteomicsDB" id="292357"/>
<dbReference type="Pumba" id="Q922Q8"/>
<dbReference type="Antibodypedia" id="30529">
    <property type="antibodies" value="121 antibodies from 21 providers"/>
</dbReference>
<dbReference type="DNASU" id="98238"/>
<dbReference type="Ensembl" id="ENSMUST00000021239.7">
    <property type="protein sequence ID" value="ENSMUSP00000021239.7"/>
    <property type="gene ID" value="ENSMUSG00000020869.9"/>
</dbReference>
<dbReference type="GeneID" id="98238"/>
<dbReference type="KEGG" id="mmu:98238"/>
<dbReference type="UCSC" id="uc007kze.1">
    <property type="organism name" value="mouse"/>
</dbReference>
<dbReference type="AGR" id="MGI:2138133"/>
<dbReference type="CTD" id="55379"/>
<dbReference type="MGI" id="MGI:2138133">
    <property type="gene designation" value="Lrrc59"/>
</dbReference>
<dbReference type="VEuPathDB" id="HostDB:ENSMUSG00000020869"/>
<dbReference type="eggNOG" id="KOG0473">
    <property type="taxonomic scope" value="Eukaryota"/>
</dbReference>
<dbReference type="eggNOG" id="KOG0619">
    <property type="taxonomic scope" value="Eukaryota"/>
</dbReference>
<dbReference type="GeneTree" id="ENSGT00390000017385"/>
<dbReference type="HOGENOM" id="CLU_062247_1_0_1"/>
<dbReference type="InParanoid" id="Q922Q8"/>
<dbReference type="OMA" id="CASVNTI"/>
<dbReference type="OrthoDB" id="1394818at2759"/>
<dbReference type="PhylomeDB" id="Q922Q8"/>
<dbReference type="TreeFam" id="TF316929"/>
<dbReference type="BioGRID-ORCS" id="98238">
    <property type="hits" value="3 hits in 77 CRISPR screens"/>
</dbReference>
<dbReference type="CD-CODE" id="CE726F99">
    <property type="entry name" value="Postsynaptic density"/>
</dbReference>
<dbReference type="ChiTaRS" id="Lrrc59">
    <property type="organism name" value="mouse"/>
</dbReference>
<dbReference type="PRO" id="PR:Q922Q8"/>
<dbReference type="Proteomes" id="UP000000589">
    <property type="component" value="Chromosome 11"/>
</dbReference>
<dbReference type="RNAct" id="Q922Q8">
    <property type="molecule type" value="protein"/>
</dbReference>
<dbReference type="Bgee" id="ENSMUSG00000020869">
    <property type="expression patterns" value="Expressed in lacrimal gland and 268 other cell types or tissues"/>
</dbReference>
<dbReference type="GO" id="GO:0005789">
    <property type="term" value="C:endoplasmic reticulum membrane"/>
    <property type="evidence" value="ECO:0007669"/>
    <property type="project" value="UniProtKB-SubCell"/>
</dbReference>
<dbReference type="GO" id="GO:0042645">
    <property type="term" value="C:mitochondrial nucleoid"/>
    <property type="evidence" value="ECO:0007669"/>
    <property type="project" value="Ensembl"/>
</dbReference>
<dbReference type="GO" id="GO:0005635">
    <property type="term" value="C:nuclear envelope"/>
    <property type="evidence" value="ECO:0007669"/>
    <property type="project" value="UniProtKB-SubCell"/>
</dbReference>
<dbReference type="FunFam" id="3.80.10.10:FF:000141">
    <property type="entry name" value="Leucine-rich repeat-containing protein 59"/>
    <property type="match status" value="1"/>
</dbReference>
<dbReference type="Gene3D" id="3.80.10.10">
    <property type="entry name" value="Ribonuclease Inhibitor"/>
    <property type="match status" value="1"/>
</dbReference>
<dbReference type="InterPro" id="IPR001611">
    <property type="entry name" value="Leu-rich_rpt"/>
</dbReference>
<dbReference type="InterPro" id="IPR003591">
    <property type="entry name" value="Leu-rich_rpt_typical-subtyp"/>
</dbReference>
<dbReference type="InterPro" id="IPR032675">
    <property type="entry name" value="LRR_dom_sf"/>
</dbReference>
<dbReference type="InterPro" id="IPR050216">
    <property type="entry name" value="LRR_domain-containing"/>
</dbReference>
<dbReference type="PANTHER" id="PTHR48051">
    <property type="match status" value="1"/>
</dbReference>
<dbReference type="PANTHER" id="PTHR48051:SF42">
    <property type="entry name" value="LEUCINE-RICH REPEAT-CONTAINING PROTEIN 18-LIKE"/>
    <property type="match status" value="1"/>
</dbReference>
<dbReference type="Pfam" id="PF00560">
    <property type="entry name" value="LRR_1"/>
    <property type="match status" value="1"/>
</dbReference>
<dbReference type="Pfam" id="PF13855">
    <property type="entry name" value="LRR_8"/>
    <property type="match status" value="1"/>
</dbReference>
<dbReference type="PRINTS" id="PR00019">
    <property type="entry name" value="LEURICHRPT"/>
</dbReference>
<dbReference type="SMART" id="SM00369">
    <property type="entry name" value="LRR_TYP"/>
    <property type="match status" value="4"/>
</dbReference>
<dbReference type="SUPFAM" id="SSF52058">
    <property type="entry name" value="L domain-like"/>
    <property type="match status" value="1"/>
</dbReference>
<dbReference type="PROSITE" id="PS51450">
    <property type="entry name" value="LRR"/>
    <property type="match status" value="4"/>
</dbReference>
<name>LRC59_MOUSE</name>